<sequence length="408" mass="44744">MKVSSAIALLLPVVAARFVDSAFEQDHVQLHPEQAAAEQFLIELSPGETRWVTEDEKWELRRNGQRFMDITDNRDLGLASAQSATTGPARVFPPNVTLDEEVFPLLANLSKGELQTHLEKLTSFHTRYYRSEHGRASSNWLLGQVKKTVGEAGGFKHGITVKPFKHPWGQNSVIARIPGQTNRTIVVGAHQDSINLFLPSVLSAPGADDDGSGTVTILEALRVLLQSEAVLAGKAANTIEFHWYSAEEGGLLGSQAIFNTYEKASRDVRAMLQQDMTGFVQRTLDAGEVESVGVIVDYVDPGLTAFIKKVITAYCDIPFIETKCGYACSDHASASKAGYPSAFVIESAFERSDDHIHTSDDLIKYLSFDHMLQHARLTLAFVYELAFADFDKLDKAAAVSVAPEMGDL</sequence>
<proteinExistence type="inferred from homology"/>
<comment type="function">
    <text evidence="1">Extracellular aminopeptidase that allows assimilation of proteinaceous substrates.</text>
</comment>
<comment type="cofactor">
    <cofactor evidence="1">
        <name>Zn(2+)</name>
        <dbReference type="ChEBI" id="CHEBI:29105"/>
    </cofactor>
    <text evidence="1">Binds 2 Zn(2+) ions per subunit.</text>
</comment>
<comment type="subunit">
    <text evidence="1">Monomer.</text>
</comment>
<comment type="subcellular location">
    <subcellularLocation>
        <location evidence="1">Secreted</location>
    </subcellularLocation>
</comment>
<comment type="similarity">
    <text evidence="3">Belongs to the peptidase M28 family. M28E subfamily.</text>
</comment>
<name>LAP1_GROCL</name>
<evidence type="ECO:0000250" key="1"/>
<evidence type="ECO:0000255" key="2"/>
<evidence type="ECO:0000305" key="3"/>
<organism>
    <name type="scientific">Grosmannia clavigera (strain kw1407 / UAMH 11150)</name>
    <name type="common">Blue stain fungus</name>
    <name type="synonym">Graphiocladiella clavigera</name>
    <dbReference type="NCBI Taxonomy" id="655863"/>
    <lineage>
        <taxon>Eukaryota</taxon>
        <taxon>Fungi</taxon>
        <taxon>Dikarya</taxon>
        <taxon>Ascomycota</taxon>
        <taxon>Pezizomycotina</taxon>
        <taxon>Sordariomycetes</taxon>
        <taxon>Sordariomycetidae</taxon>
        <taxon>Ophiostomatales</taxon>
        <taxon>Ophiostomataceae</taxon>
        <taxon>Leptographium</taxon>
    </lineage>
</organism>
<protein>
    <recommendedName>
        <fullName>Leucine aminopeptidase 1</fullName>
        <ecNumber>3.4.11.-</ecNumber>
    </recommendedName>
    <alternativeName>
        <fullName>Leucyl aminopeptidase 1</fullName>
        <shortName>LAP1</shortName>
    </alternativeName>
</protein>
<feature type="signal peptide" evidence="2">
    <location>
        <begin position="1"/>
        <end position="16"/>
    </location>
</feature>
<feature type="propeptide" id="PRO_0000412409" evidence="1">
    <location>
        <begin position="17"/>
        <end position="89"/>
    </location>
</feature>
<feature type="chain" id="PRO_0000412410" description="Leucine aminopeptidase 1">
    <location>
        <begin position="90"/>
        <end position="408"/>
    </location>
</feature>
<feature type="binding site" evidence="1">
    <location>
        <position position="190"/>
    </location>
    <ligand>
        <name>Zn(2+)</name>
        <dbReference type="ChEBI" id="CHEBI:29105"/>
        <label>1</label>
    </ligand>
</feature>
<feature type="binding site" evidence="1">
    <location>
        <position position="209"/>
    </location>
    <ligand>
        <name>Zn(2+)</name>
        <dbReference type="ChEBI" id="CHEBI:29105"/>
        <label>1</label>
    </ligand>
</feature>
<feature type="binding site" evidence="1">
    <location>
        <position position="209"/>
    </location>
    <ligand>
        <name>Zn(2+)</name>
        <dbReference type="ChEBI" id="CHEBI:29105"/>
        <label>2</label>
        <note>catalytic</note>
    </ligand>
</feature>
<feature type="binding site" evidence="1">
    <location>
        <position position="248"/>
    </location>
    <ligand>
        <name>Zn(2+)</name>
        <dbReference type="ChEBI" id="CHEBI:29105"/>
        <label>2</label>
        <note>catalytic</note>
    </ligand>
</feature>
<feature type="binding site" evidence="1">
    <location>
        <position position="275"/>
    </location>
    <ligand>
        <name>Zn(2+)</name>
        <dbReference type="ChEBI" id="CHEBI:29105"/>
        <label>1</label>
    </ligand>
</feature>
<feature type="binding site" evidence="1">
    <location>
        <position position="357"/>
    </location>
    <ligand>
        <name>Zn(2+)</name>
        <dbReference type="ChEBI" id="CHEBI:29105"/>
        <label>2</label>
        <note>catalytic</note>
    </ligand>
</feature>
<feature type="glycosylation site" description="N-linked (GlcNAc...) asparagine" evidence="2">
    <location>
        <position position="95"/>
    </location>
</feature>
<feature type="glycosylation site" description="N-linked (GlcNAc...) asparagine" evidence="2">
    <location>
        <position position="108"/>
    </location>
</feature>
<feature type="glycosylation site" description="N-linked (GlcNAc...) asparagine" evidence="2">
    <location>
        <position position="182"/>
    </location>
</feature>
<feature type="disulfide bond" evidence="1">
    <location>
        <begin position="324"/>
        <end position="328"/>
    </location>
</feature>
<keyword id="KW-0031">Aminopeptidase</keyword>
<keyword id="KW-1015">Disulfide bond</keyword>
<keyword id="KW-0325">Glycoprotein</keyword>
<keyword id="KW-0378">Hydrolase</keyword>
<keyword id="KW-0479">Metal-binding</keyword>
<keyword id="KW-0645">Protease</keyword>
<keyword id="KW-1185">Reference proteome</keyword>
<keyword id="KW-0964">Secreted</keyword>
<keyword id="KW-0732">Signal</keyword>
<keyword id="KW-0862">Zinc</keyword>
<keyword id="KW-0865">Zymogen</keyword>
<gene>
    <name type="primary">LAP1</name>
    <name type="ORF">CMQ_3959</name>
</gene>
<reference key="1">
    <citation type="journal article" date="2011" name="Proc. Natl. Acad. Sci. U.S.A.">
        <title>Genome and transcriptome analyses of the mountain pine beetle-fungal symbiont Grosmannia clavigera, a lodgepole pine pathogen.</title>
        <authorList>
            <person name="DiGuistini S."/>
            <person name="Wang Y."/>
            <person name="Liao N.Y."/>
            <person name="Taylor G."/>
            <person name="Tanguay P."/>
            <person name="Feau N."/>
            <person name="Henrissat B."/>
            <person name="Chan S.K."/>
            <person name="Hesse-Orce U."/>
            <person name="Alamouti S.M."/>
            <person name="Tsui C.K.M."/>
            <person name="Docking R.T."/>
            <person name="Levasseur A."/>
            <person name="Haridas S."/>
            <person name="Robertson G."/>
            <person name="Birol I."/>
            <person name="Holt R.A."/>
            <person name="Marra M.A."/>
            <person name="Hamelin R.C."/>
            <person name="Hirst M."/>
            <person name="Jones S.J.M."/>
            <person name="Bohlmann J."/>
            <person name="Breuil C."/>
        </authorList>
    </citation>
    <scope>NUCLEOTIDE SEQUENCE [LARGE SCALE GENOMIC DNA]</scope>
    <source>
        <strain>kw1407 / UAMH 11150</strain>
    </source>
</reference>
<dbReference type="EC" id="3.4.11.-"/>
<dbReference type="EMBL" id="GL629735">
    <property type="protein sequence ID" value="EFX05890.1"/>
    <property type="molecule type" value="Genomic_DNA"/>
</dbReference>
<dbReference type="RefSeq" id="XP_014175372.1">
    <property type="nucleotide sequence ID" value="XM_014319897.1"/>
</dbReference>
<dbReference type="SMR" id="F0X8C8"/>
<dbReference type="FunCoup" id="F0X8C8">
    <property type="interactions" value="24"/>
</dbReference>
<dbReference type="STRING" id="655863.F0X8C8"/>
<dbReference type="GlyCosmos" id="F0X8C8">
    <property type="glycosylation" value="3 sites, No reported glycans"/>
</dbReference>
<dbReference type="GeneID" id="25977116"/>
<dbReference type="eggNOG" id="KOG2195">
    <property type="taxonomic scope" value="Eukaryota"/>
</dbReference>
<dbReference type="HOGENOM" id="CLU_025866_0_0_1"/>
<dbReference type="InParanoid" id="F0X8C8"/>
<dbReference type="OrthoDB" id="2214at2759"/>
<dbReference type="Proteomes" id="UP000007796">
    <property type="component" value="Unassembled WGS sequence"/>
</dbReference>
<dbReference type="GO" id="GO:0005576">
    <property type="term" value="C:extracellular region"/>
    <property type="evidence" value="ECO:0007669"/>
    <property type="project" value="UniProtKB-SubCell"/>
</dbReference>
<dbReference type="GO" id="GO:0004177">
    <property type="term" value="F:aminopeptidase activity"/>
    <property type="evidence" value="ECO:0007669"/>
    <property type="project" value="UniProtKB-KW"/>
</dbReference>
<dbReference type="GO" id="GO:0046872">
    <property type="term" value="F:metal ion binding"/>
    <property type="evidence" value="ECO:0007669"/>
    <property type="project" value="UniProtKB-KW"/>
</dbReference>
<dbReference type="GO" id="GO:0008235">
    <property type="term" value="F:metalloexopeptidase activity"/>
    <property type="evidence" value="ECO:0007669"/>
    <property type="project" value="InterPro"/>
</dbReference>
<dbReference type="GO" id="GO:0006508">
    <property type="term" value="P:proteolysis"/>
    <property type="evidence" value="ECO:0007669"/>
    <property type="project" value="UniProtKB-KW"/>
</dbReference>
<dbReference type="CDD" id="cd03879">
    <property type="entry name" value="M28_AAP"/>
    <property type="match status" value="1"/>
</dbReference>
<dbReference type="FunFam" id="3.40.630.10:FF:000042">
    <property type="entry name" value="Peptide hydrolase"/>
    <property type="match status" value="1"/>
</dbReference>
<dbReference type="Gene3D" id="3.40.630.10">
    <property type="entry name" value="Zn peptidases"/>
    <property type="match status" value="1"/>
</dbReference>
<dbReference type="InterPro" id="IPR045175">
    <property type="entry name" value="M28_fam"/>
</dbReference>
<dbReference type="InterPro" id="IPR007484">
    <property type="entry name" value="Peptidase_M28"/>
</dbReference>
<dbReference type="PANTHER" id="PTHR12147:SF56">
    <property type="entry name" value="AMINOPEPTIDASE YDR415C-RELATED"/>
    <property type="match status" value="1"/>
</dbReference>
<dbReference type="PANTHER" id="PTHR12147">
    <property type="entry name" value="METALLOPEPTIDASE M28 FAMILY MEMBER"/>
    <property type="match status" value="1"/>
</dbReference>
<dbReference type="Pfam" id="PF04389">
    <property type="entry name" value="Peptidase_M28"/>
    <property type="match status" value="1"/>
</dbReference>
<dbReference type="SUPFAM" id="SSF53187">
    <property type="entry name" value="Zn-dependent exopeptidases"/>
    <property type="match status" value="1"/>
</dbReference>
<accession>F0X8C8</accession>